<sequence>MARKGILGTKLGMTQVFDESNRVVPVTVVKAGPNVVTRIRTPERDGYSAVQLAYGEISPRKVNKPLTGQYTAAGVNPRRYLAELRLDDSDAATEYQVGQELTAEIFADGSYVDVTGTSKGKGFAGTMKRHGFRGQGASHGAQAVHRRPGSIGGCATPARVFKGTRMAGRMGNDRVTVLNLLVHKVDAENGVLLIKGAVPGRTGGLVMVRSAIKRGEK</sequence>
<name>RL3_MYCBT</name>
<dbReference type="EMBL" id="AP010918">
    <property type="protein sequence ID" value="BAH25014.1"/>
    <property type="molecule type" value="Genomic_DNA"/>
</dbReference>
<dbReference type="RefSeq" id="WP_003403579.1">
    <property type="nucleotide sequence ID" value="NZ_CP014566.1"/>
</dbReference>
<dbReference type="SMR" id="C1AL35"/>
<dbReference type="GeneID" id="45424666"/>
<dbReference type="KEGG" id="mbt:JTY_0721"/>
<dbReference type="HOGENOM" id="CLU_044142_4_1_11"/>
<dbReference type="GO" id="GO:0022625">
    <property type="term" value="C:cytosolic large ribosomal subunit"/>
    <property type="evidence" value="ECO:0007669"/>
    <property type="project" value="TreeGrafter"/>
</dbReference>
<dbReference type="GO" id="GO:0019843">
    <property type="term" value="F:rRNA binding"/>
    <property type="evidence" value="ECO:0007669"/>
    <property type="project" value="UniProtKB-UniRule"/>
</dbReference>
<dbReference type="GO" id="GO:0003735">
    <property type="term" value="F:structural constituent of ribosome"/>
    <property type="evidence" value="ECO:0007669"/>
    <property type="project" value="InterPro"/>
</dbReference>
<dbReference type="GO" id="GO:0006412">
    <property type="term" value="P:translation"/>
    <property type="evidence" value="ECO:0007669"/>
    <property type="project" value="UniProtKB-UniRule"/>
</dbReference>
<dbReference type="FunFam" id="2.40.30.10:FF:000004">
    <property type="entry name" value="50S ribosomal protein L3"/>
    <property type="match status" value="1"/>
</dbReference>
<dbReference type="FunFam" id="3.30.160.810:FF:000001">
    <property type="entry name" value="50S ribosomal protein L3"/>
    <property type="match status" value="1"/>
</dbReference>
<dbReference type="Gene3D" id="3.30.160.810">
    <property type="match status" value="1"/>
</dbReference>
<dbReference type="Gene3D" id="2.40.30.10">
    <property type="entry name" value="Translation factors"/>
    <property type="match status" value="1"/>
</dbReference>
<dbReference type="HAMAP" id="MF_01325_B">
    <property type="entry name" value="Ribosomal_uL3_B"/>
    <property type="match status" value="1"/>
</dbReference>
<dbReference type="InterPro" id="IPR000597">
    <property type="entry name" value="Ribosomal_uL3"/>
</dbReference>
<dbReference type="InterPro" id="IPR019927">
    <property type="entry name" value="Ribosomal_uL3_bac/org-type"/>
</dbReference>
<dbReference type="InterPro" id="IPR019926">
    <property type="entry name" value="Ribosomal_uL3_CS"/>
</dbReference>
<dbReference type="InterPro" id="IPR009000">
    <property type="entry name" value="Transl_B-barrel_sf"/>
</dbReference>
<dbReference type="NCBIfam" id="TIGR03625">
    <property type="entry name" value="L3_bact"/>
    <property type="match status" value="1"/>
</dbReference>
<dbReference type="PANTHER" id="PTHR11229">
    <property type="entry name" value="50S RIBOSOMAL PROTEIN L3"/>
    <property type="match status" value="1"/>
</dbReference>
<dbReference type="PANTHER" id="PTHR11229:SF16">
    <property type="entry name" value="LARGE RIBOSOMAL SUBUNIT PROTEIN UL3C"/>
    <property type="match status" value="1"/>
</dbReference>
<dbReference type="Pfam" id="PF00297">
    <property type="entry name" value="Ribosomal_L3"/>
    <property type="match status" value="1"/>
</dbReference>
<dbReference type="SUPFAM" id="SSF50447">
    <property type="entry name" value="Translation proteins"/>
    <property type="match status" value="1"/>
</dbReference>
<dbReference type="PROSITE" id="PS00474">
    <property type="entry name" value="RIBOSOMAL_L3"/>
    <property type="match status" value="1"/>
</dbReference>
<feature type="chain" id="PRO_1000165897" description="Large ribosomal subunit protein uL3">
    <location>
        <begin position="1"/>
        <end position="217"/>
    </location>
</feature>
<comment type="function">
    <text evidence="1">One of the primary rRNA binding proteins, it binds directly near the 3'-end of the 23S rRNA, where it nucleates assembly of the 50S subunit.</text>
</comment>
<comment type="subunit">
    <text evidence="1">Part of the 50S ribosomal subunit. Forms a cluster with proteins L14 and L19.</text>
</comment>
<comment type="similarity">
    <text evidence="1">Belongs to the universal ribosomal protein uL3 family.</text>
</comment>
<evidence type="ECO:0000255" key="1">
    <source>
        <dbReference type="HAMAP-Rule" id="MF_01325"/>
    </source>
</evidence>
<evidence type="ECO:0000305" key="2"/>
<reference key="1">
    <citation type="journal article" date="2009" name="Vaccine">
        <title>Whole genome sequence analysis of Mycobacterium bovis bacillus Calmette-Guerin (BCG) Tokyo 172: a comparative study of BCG vaccine substrains.</title>
        <authorList>
            <person name="Seki M."/>
            <person name="Honda I."/>
            <person name="Fujita I."/>
            <person name="Yano I."/>
            <person name="Yamamoto S."/>
            <person name="Koyama A."/>
        </authorList>
    </citation>
    <scope>NUCLEOTIDE SEQUENCE [LARGE SCALE GENOMIC DNA]</scope>
    <source>
        <strain>BCG / Tokyo 172 / ATCC 35737 / TMC 1019</strain>
    </source>
</reference>
<keyword id="KW-0687">Ribonucleoprotein</keyword>
<keyword id="KW-0689">Ribosomal protein</keyword>
<keyword id="KW-0694">RNA-binding</keyword>
<keyword id="KW-0699">rRNA-binding</keyword>
<organism>
    <name type="scientific">Mycobacterium bovis (strain BCG / Tokyo 172 / ATCC 35737 / TMC 1019)</name>
    <dbReference type="NCBI Taxonomy" id="561275"/>
    <lineage>
        <taxon>Bacteria</taxon>
        <taxon>Bacillati</taxon>
        <taxon>Actinomycetota</taxon>
        <taxon>Actinomycetes</taxon>
        <taxon>Mycobacteriales</taxon>
        <taxon>Mycobacteriaceae</taxon>
        <taxon>Mycobacterium</taxon>
        <taxon>Mycobacterium tuberculosis complex</taxon>
    </lineage>
</organism>
<proteinExistence type="inferred from homology"/>
<protein>
    <recommendedName>
        <fullName evidence="1">Large ribosomal subunit protein uL3</fullName>
    </recommendedName>
    <alternativeName>
        <fullName evidence="2">50S ribosomal protein L3</fullName>
    </alternativeName>
</protein>
<accession>C1AL35</accession>
<gene>
    <name evidence="1" type="primary">rplC</name>
    <name type="ordered locus">JTY_0721</name>
</gene>